<protein>
    <recommendedName>
        <fullName evidence="1">Elongation factor P</fullName>
        <shortName evidence="1">EF-P</shortName>
    </recommendedName>
</protein>
<comment type="function">
    <text evidence="1">Involved in peptide bond synthesis. Stimulates efficient translation and peptide-bond synthesis on native or reconstituted 70S ribosomes in vitro. Probably functions indirectly by altering the affinity of the ribosome for aminoacyl-tRNA, thus increasing their reactivity as acceptors for peptidyl transferase.</text>
</comment>
<comment type="pathway">
    <text evidence="1">Protein biosynthesis; polypeptide chain elongation.</text>
</comment>
<comment type="subcellular location">
    <subcellularLocation>
        <location evidence="1">Cytoplasm</location>
    </subcellularLocation>
</comment>
<comment type="similarity">
    <text evidence="1">Belongs to the elongation factor P family.</text>
</comment>
<name>EFP_RICBR</name>
<accession>Q1RHW1</accession>
<proteinExistence type="inferred from homology"/>
<sequence>MKISANSIRTGNILVYNNDLWVVSKQPEHTQPGKGGAYVQVEMKNLKTGTKRNERFSSSDHLEKAELEQKDYQFLYFEDNNIVLMDNQTFEQISVNKEILDEKLPFLTENMIVKVEFYNEKPLSIELPATVILEIIETDPVIKGATATASYKPATLANGVKVKVPQYLEIGEKIVVKTEDLTYVERSK</sequence>
<feature type="chain" id="PRO_0000274853" description="Elongation factor P">
    <location>
        <begin position="1"/>
        <end position="188"/>
    </location>
</feature>
<reference key="1">
    <citation type="journal article" date="2006" name="PLoS Genet.">
        <title>Genome sequence of Rickettsia bellii illuminates the role of amoebae in gene exchanges between intracellular pathogens.</title>
        <authorList>
            <person name="Ogata H."/>
            <person name="La Scola B."/>
            <person name="Audic S."/>
            <person name="Renesto P."/>
            <person name="Blanc G."/>
            <person name="Robert C."/>
            <person name="Fournier P.-E."/>
            <person name="Claverie J.-M."/>
            <person name="Raoult D."/>
        </authorList>
    </citation>
    <scope>NUCLEOTIDE SEQUENCE [LARGE SCALE GENOMIC DNA]</scope>
    <source>
        <strain>RML369-C</strain>
    </source>
</reference>
<evidence type="ECO:0000255" key="1">
    <source>
        <dbReference type="HAMAP-Rule" id="MF_00141"/>
    </source>
</evidence>
<keyword id="KW-0963">Cytoplasm</keyword>
<keyword id="KW-0251">Elongation factor</keyword>
<keyword id="KW-0648">Protein biosynthesis</keyword>
<gene>
    <name evidence="1" type="primary">efp</name>
    <name type="ordered locus">RBE_0972</name>
</gene>
<organism>
    <name type="scientific">Rickettsia bellii (strain RML369-C)</name>
    <dbReference type="NCBI Taxonomy" id="336407"/>
    <lineage>
        <taxon>Bacteria</taxon>
        <taxon>Pseudomonadati</taxon>
        <taxon>Pseudomonadota</taxon>
        <taxon>Alphaproteobacteria</taxon>
        <taxon>Rickettsiales</taxon>
        <taxon>Rickettsiaceae</taxon>
        <taxon>Rickettsieae</taxon>
        <taxon>Rickettsia</taxon>
        <taxon>belli group</taxon>
    </lineage>
</organism>
<dbReference type="EMBL" id="CP000087">
    <property type="protein sequence ID" value="ABE05053.1"/>
    <property type="molecule type" value="Genomic_DNA"/>
</dbReference>
<dbReference type="RefSeq" id="WP_011477633.1">
    <property type="nucleotide sequence ID" value="NC_007940.1"/>
</dbReference>
<dbReference type="SMR" id="Q1RHW1"/>
<dbReference type="KEGG" id="rbe:RBE_0972"/>
<dbReference type="eggNOG" id="COG0231">
    <property type="taxonomic scope" value="Bacteria"/>
</dbReference>
<dbReference type="HOGENOM" id="CLU_074944_1_1_5"/>
<dbReference type="OrthoDB" id="9801844at2"/>
<dbReference type="UniPathway" id="UPA00345"/>
<dbReference type="Proteomes" id="UP000001951">
    <property type="component" value="Chromosome"/>
</dbReference>
<dbReference type="GO" id="GO:0005737">
    <property type="term" value="C:cytoplasm"/>
    <property type="evidence" value="ECO:0007669"/>
    <property type="project" value="UniProtKB-SubCell"/>
</dbReference>
<dbReference type="GO" id="GO:0003746">
    <property type="term" value="F:translation elongation factor activity"/>
    <property type="evidence" value="ECO:0007669"/>
    <property type="project" value="UniProtKB-UniRule"/>
</dbReference>
<dbReference type="GO" id="GO:0043043">
    <property type="term" value="P:peptide biosynthetic process"/>
    <property type="evidence" value="ECO:0007669"/>
    <property type="project" value="InterPro"/>
</dbReference>
<dbReference type="CDD" id="cd04470">
    <property type="entry name" value="S1_EF-P_repeat_1"/>
    <property type="match status" value="1"/>
</dbReference>
<dbReference type="FunFam" id="2.30.30.30:FF:000003">
    <property type="entry name" value="Elongation factor P"/>
    <property type="match status" value="1"/>
</dbReference>
<dbReference type="FunFam" id="2.40.50.140:FF:000004">
    <property type="entry name" value="Elongation factor P"/>
    <property type="match status" value="1"/>
</dbReference>
<dbReference type="FunFam" id="2.40.50.140:FF:000009">
    <property type="entry name" value="Elongation factor P"/>
    <property type="match status" value="1"/>
</dbReference>
<dbReference type="Gene3D" id="2.30.30.30">
    <property type="match status" value="1"/>
</dbReference>
<dbReference type="Gene3D" id="2.40.50.140">
    <property type="entry name" value="Nucleic acid-binding proteins"/>
    <property type="match status" value="2"/>
</dbReference>
<dbReference type="HAMAP" id="MF_00141">
    <property type="entry name" value="EF_P"/>
    <property type="match status" value="1"/>
</dbReference>
<dbReference type="InterPro" id="IPR015365">
    <property type="entry name" value="Elong-fact-P_C"/>
</dbReference>
<dbReference type="InterPro" id="IPR012340">
    <property type="entry name" value="NA-bd_OB-fold"/>
</dbReference>
<dbReference type="InterPro" id="IPR014722">
    <property type="entry name" value="Rib_uL2_dom2"/>
</dbReference>
<dbReference type="InterPro" id="IPR020599">
    <property type="entry name" value="Transl_elong_fac_P/YeiP"/>
</dbReference>
<dbReference type="InterPro" id="IPR013185">
    <property type="entry name" value="Transl_elong_KOW-like"/>
</dbReference>
<dbReference type="InterPro" id="IPR001059">
    <property type="entry name" value="Transl_elong_P/YeiP_cen"/>
</dbReference>
<dbReference type="InterPro" id="IPR013852">
    <property type="entry name" value="Transl_elong_P/YeiP_CS"/>
</dbReference>
<dbReference type="InterPro" id="IPR011768">
    <property type="entry name" value="Transl_elongation_fac_P"/>
</dbReference>
<dbReference type="InterPro" id="IPR008991">
    <property type="entry name" value="Translation_prot_SH3-like_sf"/>
</dbReference>
<dbReference type="NCBIfam" id="TIGR00038">
    <property type="entry name" value="efp"/>
    <property type="match status" value="1"/>
</dbReference>
<dbReference type="NCBIfam" id="NF001810">
    <property type="entry name" value="PRK00529.1"/>
    <property type="match status" value="1"/>
</dbReference>
<dbReference type="PANTHER" id="PTHR30053">
    <property type="entry name" value="ELONGATION FACTOR P"/>
    <property type="match status" value="1"/>
</dbReference>
<dbReference type="PANTHER" id="PTHR30053:SF14">
    <property type="entry name" value="TRANSLATION ELONGATION FACTOR KOW-LIKE DOMAIN-CONTAINING PROTEIN"/>
    <property type="match status" value="1"/>
</dbReference>
<dbReference type="Pfam" id="PF01132">
    <property type="entry name" value="EFP"/>
    <property type="match status" value="1"/>
</dbReference>
<dbReference type="Pfam" id="PF08207">
    <property type="entry name" value="EFP_N"/>
    <property type="match status" value="1"/>
</dbReference>
<dbReference type="Pfam" id="PF09285">
    <property type="entry name" value="Elong-fact-P_C"/>
    <property type="match status" value="1"/>
</dbReference>
<dbReference type="PIRSF" id="PIRSF005901">
    <property type="entry name" value="EF-P"/>
    <property type="match status" value="1"/>
</dbReference>
<dbReference type="SMART" id="SM01185">
    <property type="entry name" value="EFP"/>
    <property type="match status" value="1"/>
</dbReference>
<dbReference type="SMART" id="SM00841">
    <property type="entry name" value="Elong-fact-P_C"/>
    <property type="match status" value="1"/>
</dbReference>
<dbReference type="SUPFAM" id="SSF50249">
    <property type="entry name" value="Nucleic acid-binding proteins"/>
    <property type="match status" value="2"/>
</dbReference>
<dbReference type="SUPFAM" id="SSF50104">
    <property type="entry name" value="Translation proteins SH3-like domain"/>
    <property type="match status" value="1"/>
</dbReference>
<dbReference type="PROSITE" id="PS01275">
    <property type="entry name" value="EFP"/>
    <property type="match status" value="1"/>
</dbReference>